<comment type="function">
    <text evidence="1 3">Catalyzes the synthesis of dihydrouridine, a modified base found in the D-loop of most tRNAs. Specifically modifies U47 in cytoplasmic tRNAs (By similarity). Catalyzes the synthesis of dihydrouridine in some mRNAs, thereby affecting their translation (By similarity).</text>
</comment>
<comment type="catalytic activity">
    <reaction evidence="1">
        <text>5,6-dihydrouridine(47) in tRNA + NAD(+) = uridine(47) in tRNA + NADH + H(+)</text>
        <dbReference type="Rhea" id="RHEA:53364"/>
        <dbReference type="Rhea" id="RHEA-COMP:13539"/>
        <dbReference type="Rhea" id="RHEA-COMP:13540"/>
        <dbReference type="ChEBI" id="CHEBI:15378"/>
        <dbReference type="ChEBI" id="CHEBI:57540"/>
        <dbReference type="ChEBI" id="CHEBI:57945"/>
        <dbReference type="ChEBI" id="CHEBI:65315"/>
        <dbReference type="ChEBI" id="CHEBI:74443"/>
        <dbReference type="EC" id="1.3.1.89"/>
    </reaction>
    <physiologicalReaction direction="right-to-left" evidence="1">
        <dbReference type="Rhea" id="RHEA:53366"/>
    </physiologicalReaction>
</comment>
<comment type="catalytic activity">
    <reaction evidence="1">
        <text>5,6-dihydrouridine(47) in tRNA + NADP(+) = uridine(47) in tRNA + NADPH + H(+)</text>
        <dbReference type="Rhea" id="RHEA:53360"/>
        <dbReference type="Rhea" id="RHEA-COMP:13539"/>
        <dbReference type="Rhea" id="RHEA-COMP:13540"/>
        <dbReference type="ChEBI" id="CHEBI:15378"/>
        <dbReference type="ChEBI" id="CHEBI:57783"/>
        <dbReference type="ChEBI" id="CHEBI:58349"/>
        <dbReference type="ChEBI" id="CHEBI:65315"/>
        <dbReference type="ChEBI" id="CHEBI:74443"/>
        <dbReference type="EC" id="1.3.1.89"/>
    </reaction>
    <physiologicalReaction direction="right-to-left" evidence="1">
        <dbReference type="Rhea" id="RHEA:53362"/>
    </physiologicalReaction>
</comment>
<comment type="catalytic activity">
    <reaction evidence="3">
        <text>a 5,6-dihydrouridine in mRNA + NAD(+) = a uridine in mRNA + NADH + H(+)</text>
        <dbReference type="Rhea" id="RHEA:69851"/>
        <dbReference type="Rhea" id="RHEA-COMP:14658"/>
        <dbReference type="Rhea" id="RHEA-COMP:17789"/>
        <dbReference type="ChEBI" id="CHEBI:15378"/>
        <dbReference type="ChEBI" id="CHEBI:57540"/>
        <dbReference type="ChEBI" id="CHEBI:57945"/>
        <dbReference type="ChEBI" id="CHEBI:65315"/>
        <dbReference type="ChEBI" id="CHEBI:74443"/>
    </reaction>
    <physiologicalReaction direction="right-to-left" evidence="3">
        <dbReference type="Rhea" id="RHEA:69853"/>
    </physiologicalReaction>
</comment>
<comment type="catalytic activity">
    <reaction evidence="3">
        <text>a 5,6-dihydrouridine in mRNA + NADP(+) = a uridine in mRNA + NADPH + H(+)</text>
        <dbReference type="Rhea" id="RHEA:69855"/>
        <dbReference type="Rhea" id="RHEA-COMP:14658"/>
        <dbReference type="Rhea" id="RHEA-COMP:17789"/>
        <dbReference type="ChEBI" id="CHEBI:15378"/>
        <dbReference type="ChEBI" id="CHEBI:57783"/>
        <dbReference type="ChEBI" id="CHEBI:58349"/>
        <dbReference type="ChEBI" id="CHEBI:65315"/>
        <dbReference type="ChEBI" id="CHEBI:74443"/>
    </reaction>
    <physiologicalReaction direction="right-to-left" evidence="3">
        <dbReference type="Rhea" id="RHEA:69857"/>
    </physiologicalReaction>
</comment>
<comment type="cofactor">
    <cofactor evidence="2">
        <name>FMN</name>
        <dbReference type="ChEBI" id="CHEBI:58210"/>
    </cofactor>
</comment>
<comment type="subcellular location">
    <subcellularLocation>
        <location evidence="1">Cytoplasm</location>
    </subcellularLocation>
    <subcellularLocation>
        <location evidence="1">Nucleus</location>
    </subcellularLocation>
</comment>
<comment type="similarity">
    <text evidence="5">Belongs to the Dus family. Dus3 subfamily.</text>
</comment>
<evidence type="ECO:0000250" key="1">
    <source>
        <dbReference type="UniProtKB" id="Q06053"/>
    </source>
</evidence>
<evidence type="ECO:0000250" key="2">
    <source>
        <dbReference type="UniProtKB" id="Q5SMC7"/>
    </source>
</evidence>
<evidence type="ECO:0000250" key="3">
    <source>
        <dbReference type="UniProtKB" id="Q9UTH9"/>
    </source>
</evidence>
<evidence type="ECO:0000256" key="4">
    <source>
        <dbReference type="SAM" id="MobiDB-lite"/>
    </source>
</evidence>
<evidence type="ECO:0000305" key="5"/>
<proteinExistence type="inferred from homology"/>
<feature type="chain" id="PRO_0000330232" description="tRNA-dihydrouridine(47) synthase [NAD(P)(+)]">
    <location>
        <begin position="1"/>
        <end position="613"/>
    </location>
</feature>
<feature type="zinc finger region" description="C3H1-type 1">
    <location>
        <begin position="90"/>
        <end position="113"/>
    </location>
</feature>
<feature type="zinc finger region" description="C3H1-type 2">
    <location>
        <begin position="130"/>
        <end position="151"/>
    </location>
</feature>
<feature type="region of interest" description="Disordered" evidence="4">
    <location>
        <begin position="1"/>
        <end position="29"/>
    </location>
</feature>
<feature type="region of interest" description="Disordered" evidence="4">
    <location>
        <begin position="48"/>
        <end position="80"/>
    </location>
</feature>
<feature type="compositionally biased region" description="Basic and acidic residues" evidence="4">
    <location>
        <begin position="1"/>
        <end position="20"/>
    </location>
</feature>
<feature type="compositionally biased region" description="Basic and acidic residues" evidence="4">
    <location>
        <begin position="56"/>
        <end position="65"/>
    </location>
</feature>
<feature type="compositionally biased region" description="Basic residues" evidence="4">
    <location>
        <begin position="66"/>
        <end position="80"/>
    </location>
</feature>
<feature type="active site" description="Proton donor" evidence="2">
    <location>
        <position position="338"/>
    </location>
</feature>
<feature type="binding site" evidence="2">
    <location>
        <begin position="251"/>
        <end position="253"/>
    </location>
    <ligand>
        <name>FMN</name>
        <dbReference type="ChEBI" id="CHEBI:58210"/>
    </ligand>
</feature>
<feature type="binding site" evidence="2">
    <location>
        <position position="306"/>
    </location>
    <ligand>
        <name>FMN</name>
        <dbReference type="ChEBI" id="CHEBI:58210"/>
    </ligand>
</feature>
<feature type="binding site" evidence="2">
    <location>
        <position position="378"/>
    </location>
    <ligand>
        <name>FMN</name>
        <dbReference type="ChEBI" id="CHEBI:58210"/>
    </ligand>
</feature>
<feature type="binding site" evidence="2">
    <location>
        <position position="409"/>
    </location>
    <ligand>
        <name>FMN</name>
        <dbReference type="ChEBI" id="CHEBI:58210"/>
    </ligand>
</feature>
<feature type="binding site" evidence="2">
    <location>
        <begin position="457"/>
        <end position="459"/>
    </location>
    <ligand>
        <name>FMN</name>
        <dbReference type="ChEBI" id="CHEBI:58210"/>
    </ligand>
</feature>
<feature type="binding site" evidence="2">
    <location>
        <begin position="481"/>
        <end position="482"/>
    </location>
    <ligand>
        <name>FMN</name>
        <dbReference type="ChEBI" id="CHEBI:58210"/>
    </ligand>
</feature>
<keyword id="KW-0963">Cytoplasm</keyword>
<keyword id="KW-0285">Flavoprotein</keyword>
<keyword id="KW-0288">FMN</keyword>
<keyword id="KW-0479">Metal-binding</keyword>
<keyword id="KW-0507">mRNA processing</keyword>
<keyword id="KW-0520">NAD</keyword>
<keyword id="KW-0521">NADP</keyword>
<keyword id="KW-0539">Nucleus</keyword>
<keyword id="KW-0560">Oxidoreductase</keyword>
<keyword id="KW-1185">Reference proteome</keyword>
<keyword id="KW-0677">Repeat</keyword>
<keyword id="KW-0819">tRNA processing</keyword>
<keyword id="KW-0862">Zinc</keyword>
<keyword id="KW-0863">Zinc-finger</keyword>
<dbReference type="EC" id="1.3.1.89" evidence="1"/>
<dbReference type="EC" id="1.3.1.-" evidence="3"/>
<dbReference type="EMBL" id="CP017624">
    <property type="protein sequence ID" value="AOW27282.1"/>
    <property type="molecule type" value="Genomic_DNA"/>
</dbReference>
<dbReference type="RefSeq" id="XP_722607.2">
    <property type="nucleotide sequence ID" value="XM_717514.2"/>
</dbReference>
<dbReference type="SMR" id="Q5ALL3"/>
<dbReference type="FunCoup" id="Q5ALL3">
    <property type="interactions" value="948"/>
</dbReference>
<dbReference type="STRING" id="237561.Q5ALL3"/>
<dbReference type="EnsemblFungi" id="C2_02420C_A-T">
    <property type="protein sequence ID" value="C2_02420C_A-T-p1"/>
    <property type="gene ID" value="C2_02420C_A"/>
</dbReference>
<dbReference type="GeneID" id="3635756"/>
<dbReference type="KEGG" id="cal:CAALFM_C202420CA"/>
<dbReference type="CGD" id="CAL0000188545">
    <property type="gene designation" value="orf19.9138"/>
</dbReference>
<dbReference type="VEuPathDB" id="FungiDB:C2_02420C_A"/>
<dbReference type="eggNOG" id="KOG2333">
    <property type="taxonomic scope" value="Eukaryota"/>
</dbReference>
<dbReference type="HOGENOM" id="CLU_013299_7_3_1"/>
<dbReference type="InParanoid" id="Q5ALL3"/>
<dbReference type="OMA" id="WSYIAEC"/>
<dbReference type="OrthoDB" id="259935at2759"/>
<dbReference type="PRO" id="PR:Q5ALL3"/>
<dbReference type="Proteomes" id="UP000000559">
    <property type="component" value="Chromosome 2"/>
</dbReference>
<dbReference type="GO" id="GO:0005737">
    <property type="term" value="C:cytoplasm"/>
    <property type="evidence" value="ECO:0007669"/>
    <property type="project" value="UniProtKB-SubCell"/>
</dbReference>
<dbReference type="GO" id="GO:0034399">
    <property type="term" value="C:nuclear periphery"/>
    <property type="evidence" value="ECO:0007669"/>
    <property type="project" value="EnsemblFungi"/>
</dbReference>
<dbReference type="GO" id="GO:0050660">
    <property type="term" value="F:flavin adenine dinucleotide binding"/>
    <property type="evidence" value="ECO:0007669"/>
    <property type="project" value="InterPro"/>
</dbReference>
<dbReference type="GO" id="GO:0106414">
    <property type="term" value="F:mRNA dihydrouridine synthase activity"/>
    <property type="evidence" value="ECO:0007669"/>
    <property type="project" value="RHEA"/>
</dbReference>
<dbReference type="GO" id="GO:0017150">
    <property type="term" value="F:tRNA dihydrouridine synthase activity"/>
    <property type="evidence" value="ECO:0000318"/>
    <property type="project" value="GO_Central"/>
</dbReference>
<dbReference type="GO" id="GO:0102265">
    <property type="term" value="F:tRNA-dihydrouridine47 synthase activity"/>
    <property type="evidence" value="ECO:0007669"/>
    <property type="project" value="UniProtKB-EC"/>
</dbReference>
<dbReference type="GO" id="GO:0008270">
    <property type="term" value="F:zinc ion binding"/>
    <property type="evidence" value="ECO:0007669"/>
    <property type="project" value="UniProtKB-KW"/>
</dbReference>
<dbReference type="GO" id="GO:0006397">
    <property type="term" value="P:mRNA processing"/>
    <property type="evidence" value="ECO:0007669"/>
    <property type="project" value="UniProtKB-KW"/>
</dbReference>
<dbReference type="CDD" id="cd02801">
    <property type="entry name" value="DUS_like_FMN"/>
    <property type="match status" value="1"/>
</dbReference>
<dbReference type="FunFam" id="3.20.20.70:FF:000145">
    <property type="entry name" value="tRNA-dihydrouridine(47) synthase [NAD(P)(+)]"/>
    <property type="match status" value="1"/>
</dbReference>
<dbReference type="Gene3D" id="3.20.20.70">
    <property type="entry name" value="Aldolase class I"/>
    <property type="match status" value="1"/>
</dbReference>
<dbReference type="InterPro" id="IPR013785">
    <property type="entry name" value="Aldolase_TIM"/>
</dbReference>
<dbReference type="InterPro" id="IPR035587">
    <property type="entry name" value="DUS-like_FMN-bd"/>
</dbReference>
<dbReference type="InterPro" id="IPR018517">
    <property type="entry name" value="tRNA_hU_synthase_CS"/>
</dbReference>
<dbReference type="PANTHER" id="PTHR45846">
    <property type="entry name" value="TRNA-DIHYDROURIDINE(47) SYNTHASE [NAD(P)(+)]-LIKE"/>
    <property type="match status" value="1"/>
</dbReference>
<dbReference type="PANTHER" id="PTHR45846:SF1">
    <property type="entry name" value="TRNA-DIHYDROURIDINE(47) SYNTHASE [NAD(P)(+)]-LIKE"/>
    <property type="match status" value="1"/>
</dbReference>
<dbReference type="Pfam" id="PF01207">
    <property type="entry name" value="Dus"/>
    <property type="match status" value="1"/>
</dbReference>
<dbReference type="SUPFAM" id="SSF51395">
    <property type="entry name" value="FMN-linked oxidoreductases"/>
    <property type="match status" value="1"/>
</dbReference>
<dbReference type="PROSITE" id="PS01136">
    <property type="entry name" value="UPF0034"/>
    <property type="match status" value="1"/>
</dbReference>
<organism>
    <name type="scientific">Candida albicans (strain SC5314 / ATCC MYA-2876)</name>
    <name type="common">Yeast</name>
    <dbReference type="NCBI Taxonomy" id="237561"/>
    <lineage>
        <taxon>Eukaryota</taxon>
        <taxon>Fungi</taxon>
        <taxon>Dikarya</taxon>
        <taxon>Ascomycota</taxon>
        <taxon>Saccharomycotina</taxon>
        <taxon>Pichiomycetes</taxon>
        <taxon>Debaryomycetaceae</taxon>
        <taxon>Candida/Lodderomyces clade</taxon>
        <taxon>Candida</taxon>
    </lineage>
</organism>
<name>DUS3_CANAL</name>
<accession>Q5ALL3</accession>
<accession>A0A1D8PGK7</accession>
<reference key="1">
    <citation type="journal article" date="2004" name="Proc. Natl. Acad. Sci. U.S.A.">
        <title>The diploid genome sequence of Candida albicans.</title>
        <authorList>
            <person name="Jones T."/>
            <person name="Federspiel N.A."/>
            <person name="Chibana H."/>
            <person name="Dungan J."/>
            <person name="Kalman S."/>
            <person name="Magee B.B."/>
            <person name="Newport G."/>
            <person name="Thorstenson Y.R."/>
            <person name="Agabian N."/>
            <person name="Magee P.T."/>
            <person name="Davis R.W."/>
            <person name="Scherer S."/>
        </authorList>
    </citation>
    <scope>NUCLEOTIDE SEQUENCE [LARGE SCALE GENOMIC DNA]</scope>
    <source>
        <strain>SC5314 / ATCC MYA-2876</strain>
    </source>
</reference>
<reference key="2">
    <citation type="journal article" date="2007" name="Genome Biol.">
        <title>Assembly of the Candida albicans genome into sixteen supercontigs aligned on the eight chromosomes.</title>
        <authorList>
            <person name="van het Hoog M."/>
            <person name="Rast T.J."/>
            <person name="Martchenko M."/>
            <person name="Grindle S."/>
            <person name="Dignard D."/>
            <person name="Hogues H."/>
            <person name="Cuomo C."/>
            <person name="Berriman M."/>
            <person name="Scherer S."/>
            <person name="Magee B.B."/>
            <person name="Whiteway M."/>
            <person name="Chibana H."/>
            <person name="Nantel A."/>
            <person name="Magee P.T."/>
        </authorList>
    </citation>
    <scope>GENOME REANNOTATION</scope>
    <source>
        <strain>SC5314 / ATCC MYA-2876</strain>
    </source>
</reference>
<reference key="3">
    <citation type="journal article" date="2013" name="Genome Biol.">
        <title>Assembly of a phased diploid Candida albicans genome facilitates allele-specific measurements and provides a simple model for repeat and indel structure.</title>
        <authorList>
            <person name="Muzzey D."/>
            <person name="Schwartz K."/>
            <person name="Weissman J.S."/>
            <person name="Sherlock G."/>
        </authorList>
    </citation>
    <scope>NUCLEOTIDE SEQUENCE [LARGE SCALE GENOMIC DNA]</scope>
    <scope>GENOME REANNOTATION</scope>
    <source>
        <strain>SC5314 / ATCC MYA-2876</strain>
    </source>
</reference>
<gene>
    <name type="primary">DUS3</name>
    <name type="ordered locus">CAALFM_C202420CA</name>
    <name type="ORF">CaO19.1565</name>
    <name type="ORF">CaO19.9138</name>
</gene>
<protein>
    <recommendedName>
        <fullName>tRNA-dihydrouridine(47) synthase [NAD(P)(+)]</fullName>
        <ecNumber evidence="1">1.3.1.89</ecNumber>
    </recommendedName>
    <alternativeName>
        <fullName>mRNA-dihydrouridine synthase DUS3</fullName>
        <ecNumber evidence="3">1.3.1.-</ecNumber>
    </alternativeName>
    <alternativeName>
        <fullName>tRNA-dihydrouridine synthase 3</fullName>
    </alternativeName>
</protein>
<sequence length="613" mass="69618">MITPEKRTLDEPEVGSESKKPNNSTHVKGVAAIKAEYLVPTSSLTVVEYDDDEAEGGDREGESKPRNKKKQKGQNHKRDLKQKKDIIKLCPSLIDPEDDRICQVGADKCRFHHDIASYLESKPQDIDGICPVFEALGYCPTGIKCRWLKSHYNPETSKLIKDGDKMETAKTTNYEVNHIDKDQKMEMQKKKYFFKISQPVIKYLDSRIQNEANLAKQKEERKDNEASYVEAPFTIAEKKKLYLRNAKIVSPLTTVGNLPYRRLMKTLGADVTYSEMALSVPLIQGHNPEWALPKAHVSEYPGFGVQIASSKHWAAAKAAEAIYRNTTHVSELNLNCGCPIDLLYKQGQGSALLDQPSKLLRILSGMNASSGDIPVTVKIRTGIKEGKNTAVNLVSRVLEEGNAAAITLHGRSRQQRYSKEADWNYIAEVGTVVKNWNEQQKEDKEGRDRDPVYFVGNGDVYSHEDWYEHVNTDGIDSVMVARGALIKPWIFEEVEAQQYLDKSSSERLDILGKFAKYAIEHWGSDEYGVGLSRRFMCEFLSFTHRYIPVGIMERLPPKLNERPPKWVGRNDLETLLASTDYKDWIKITEMFLGKATDDFQFTPKHKSNAYENK</sequence>